<reference key="1">
    <citation type="journal article" date="2002" name="Dev. Genes Evol.">
        <title>Natural Twist protein variants in a panel of eleven non-human primates: possible implications of Twist gene-tree for primate species tree.</title>
        <authorList>
            <person name="Gachot-Neveu H."/>
            <person name="Stoetzel C."/>
            <person name="Quillet R."/>
            <person name="Dollfus H."/>
            <person name="Perrin-Schmitt F."/>
        </authorList>
    </citation>
    <scope>NUCLEOTIDE SEQUENCE [GENOMIC DNA]</scope>
    <source>
        <tissue>Blood</tissue>
    </source>
</reference>
<comment type="function">
    <text evidence="2">Acts as a transcriptional regulator. Inhibits myogenesis by sequestrating E proteins, inhibiting trans-activation by MEF2, and inhibiting DNA-binding by MYOD1 through physical interaction. This interaction probably involves the basic domains of both proteins. Also represses expression of pro-inflammatory cytokines such as TNFA and IL1B. Regulates cranial suture patterning and fusion. Activates transcription as a heterodimer with E proteins. Regulates gene expression differentially, depending on dimer composition. Homodimers induce expression of FGFR2 and POSTN while heterodimers repress FGFR2 and POSTN expression and induce THBS1 expression. Heterodimerization is also required for osteoblast differentiation. Represses the activity of the circadian transcriptional activator: NPAS2-BMAL1 heterodimer (By similarity).</text>
</comment>
<comment type="subunit">
    <text evidence="2">Efficient DNA binding requires dimerization with another bHLH protein. Homodimer or heterodimer with E proteins such as TCF3. ID1 binds preferentially to TCF3 but does not interact efficiently with TWIST1 so ID1 levels control the amount of TCF3 available to dimerize with TWIST and thus determine the type of dimer formed (By similarity).</text>
</comment>
<comment type="subcellular location">
    <subcellularLocation>
        <location evidence="3">Nucleus</location>
    </subcellularLocation>
</comment>
<feature type="chain" id="PRO_0000127484" description="Twist-related protein 1">
    <location>
        <begin position="1"/>
        <end position="204"/>
    </location>
</feature>
<feature type="domain" description="bHLH" evidence="3">
    <location>
        <begin position="110"/>
        <end position="161"/>
    </location>
</feature>
<feature type="region of interest" description="Disordered" evidence="4">
    <location>
        <begin position="1"/>
        <end position="107"/>
    </location>
</feature>
<feature type="region of interest" description="Sufficient for transactivation activity" evidence="1">
    <location>
        <begin position="163"/>
        <end position="193"/>
    </location>
</feature>
<feature type="compositionally biased region" description="Low complexity" evidence="4">
    <location>
        <begin position="1"/>
        <end position="18"/>
    </location>
</feature>
<feature type="compositionally biased region" description="Basic residues" evidence="4">
    <location>
        <begin position="34"/>
        <end position="43"/>
    </location>
</feature>
<feature type="compositionally biased region" description="Gly residues" evidence="4">
    <location>
        <begin position="46"/>
        <end position="65"/>
    </location>
</feature>
<feature type="compositionally biased region" description="Gly residues" evidence="4">
    <location>
        <begin position="80"/>
        <end position="101"/>
    </location>
</feature>
<protein>
    <recommendedName>
        <fullName>Twist-related protein 1</fullName>
    </recommendedName>
</protein>
<proteinExistence type="inferred from homology"/>
<gene>
    <name type="primary">TWIST1</name>
    <name type="synonym">TWIST</name>
</gene>
<evidence type="ECO:0000250" key="1"/>
<evidence type="ECO:0000250" key="2">
    <source>
        <dbReference type="UniProtKB" id="P26687"/>
    </source>
</evidence>
<evidence type="ECO:0000255" key="3">
    <source>
        <dbReference type="PROSITE-ProRule" id="PRU00981"/>
    </source>
</evidence>
<evidence type="ECO:0000256" key="4">
    <source>
        <dbReference type="SAM" id="MobiDB-lite"/>
    </source>
</evidence>
<name>TWST1_NOMCO</name>
<keyword id="KW-0010">Activator</keyword>
<keyword id="KW-0090">Biological rhythms</keyword>
<keyword id="KW-0217">Developmental protein</keyword>
<keyword id="KW-0221">Differentiation</keyword>
<keyword id="KW-0238">DNA-binding</keyword>
<keyword id="KW-0517">Myogenesis</keyword>
<keyword id="KW-0539">Nucleus</keyword>
<keyword id="KW-0678">Repressor</keyword>
<keyword id="KW-0804">Transcription</keyword>
<keyword id="KW-0805">Transcription regulation</keyword>
<dbReference type="EMBL" id="AJ488160">
    <property type="protein sequence ID" value="CAD32474.1"/>
    <property type="molecule type" value="Genomic_DNA"/>
</dbReference>
<dbReference type="SMR" id="Q8MIE7"/>
<dbReference type="GO" id="GO:0005634">
    <property type="term" value="C:nucleus"/>
    <property type="evidence" value="ECO:0007669"/>
    <property type="project" value="UniProtKB-SubCell"/>
</dbReference>
<dbReference type="GO" id="GO:0000981">
    <property type="term" value="F:DNA-binding transcription factor activity, RNA polymerase II-specific"/>
    <property type="evidence" value="ECO:0007669"/>
    <property type="project" value="InterPro"/>
</dbReference>
<dbReference type="GO" id="GO:0046983">
    <property type="term" value="F:protein dimerization activity"/>
    <property type="evidence" value="ECO:0007669"/>
    <property type="project" value="InterPro"/>
</dbReference>
<dbReference type="GO" id="GO:0000977">
    <property type="term" value="F:RNA polymerase II transcription regulatory region sequence-specific DNA binding"/>
    <property type="evidence" value="ECO:0007669"/>
    <property type="project" value="TreeGrafter"/>
</dbReference>
<dbReference type="GO" id="GO:0030154">
    <property type="term" value="P:cell differentiation"/>
    <property type="evidence" value="ECO:0007669"/>
    <property type="project" value="UniProtKB-KW"/>
</dbReference>
<dbReference type="GO" id="GO:0007517">
    <property type="term" value="P:muscle organ development"/>
    <property type="evidence" value="ECO:0007669"/>
    <property type="project" value="UniProtKB-KW"/>
</dbReference>
<dbReference type="GO" id="GO:0045892">
    <property type="term" value="P:negative regulation of DNA-templated transcription"/>
    <property type="evidence" value="ECO:0000250"/>
    <property type="project" value="UniProtKB"/>
</dbReference>
<dbReference type="GO" id="GO:0048511">
    <property type="term" value="P:rhythmic process"/>
    <property type="evidence" value="ECO:0007669"/>
    <property type="project" value="UniProtKB-KW"/>
</dbReference>
<dbReference type="CDD" id="cd11412">
    <property type="entry name" value="bHLH_TS_TWIST1"/>
    <property type="match status" value="1"/>
</dbReference>
<dbReference type="FunFam" id="4.10.280.10:FF:000030">
    <property type="entry name" value="Twist transcription factor"/>
    <property type="match status" value="1"/>
</dbReference>
<dbReference type="Gene3D" id="4.10.280.10">
    <property type="entry name" value="Helix-loop-helix DNA-binding domain"/>
    <property type="match status" value="1"/>
</dbReference>
<dbReference type="InterPro" id="IPR011598">
    <property type="entry name" value="bHLH_dom"/>
</dbReference>
<dbReference type="InterPro" id="IPR050283">
    <property type="entry name" value="E-box_TF_Regulators"/>
</dbReference>
<dbReference type="InterPro" id="IPR036638">
    <property type="entry name" value="HLH_DNA-bd_sf"/>
</dbReference>
<dbReference type="InterPro" id="IPR047093">
    <property type="entry name" value="TWIST1_bHLH"/>
</dbReference>
<dbReference type="PANTHER" id="PTHR23349">
    <property type="entry name" value="BASIC HELIX-LOOP-HELIX TRANSCRIPTION FACTOR, TWIST"/>
    <property type="match status" value="1"/>
</dbReference>
<dbReference type="PANTHER" id="PTHR23349:SF64">
    <property type="entry name" value="TWIST-RELATED PROTEIN 1"/>
    <property type="match status" value="1"/>
</dbReference>
<dbReference type="Pfam" id="PF00010">
    <property type="entry name" value="HLH"/>
    <property type="match status" value="1"/>
</dbReference>
<dbReference type="SMART" id="SM00353">
    <property type="entry name" value="HLH"/>
    <property type="match status" value="1"/>
</dbReference>
<dbReference type="SUPFAM" id="SSF47459">
    <property type="entry name" value="HLH, helix-loop-helix DNA-binding domain"/>
    <property type="match status" value="1"/>
</dbReference>
<dbReference type="PROSITE" id="PS50888">
    <property type="entry name" value="BHLH"/>
    <property type="match status" value="1"/>
</dbReference>
<accession>Q8MIE7</accession>
<organism>
    <name type="scientific">Nomascus concolor</name>
    <name type="common">Black crested gibbon</name>
    <name type="synonym">Hylobates concolor</name>
    <dbReference type="NCBI Taxonomy" id="29089"/>
    <lineage>
        <taxon>Eukaryota</taxon>
        <taxon>Metazoa</taxon>
        <taxon>Chordata</taxon>
        <taxon>Craniata</taxon>
        <taxon>Vertebrata</taxon>
        <taxon>Euteleostomi</taxon>
        <taxon>Mammalia</taxon>
        <taxon>Eutheria</taxon>
        <taxon>Euarchontoglires</taxon>
        <taxon>Primates</taxon>
        <taxon>Haplorrhini</taxon>
        <taxon>Catarrhini</taxon>
        <taxon>Hylobatidae</taxon>
        <taxon>Nomascus</taxon>
    </lineage>
</organism>
<sequence length="204" mass="21132">MMQDVSSSPVSPADDSLSNSEEEPDRQQPPSGKRGGRKRRSSRRSAGGGAGPGGAAGGGVGGGDEPGSPAQGKRGKKSAGCGGGGSAGGGGGGGSSSGGGSPQSYEELQTQRVMANVRERQRTQSLNEAFAALRKIIPTLPSDKLSKIQTLKLAARYIDFLYQVLQSDELDSKMASCSYVAHERFSYAFSVWRMEGAWSMSASH</sequence>